<sequence length="142" mass="15179">MARPPPLPGLVGRRSGRAVDRAIGWRLFLLLWHPALGAQARPPRRAPGGRWRSRRVFLLVRRTRAAAYAFAIRRGVVRVVGGGGQLRPAPGEAAGEAGVAGAGLEAWRHPSGPARTQLEGQEGAGGWLVVGFLLCLFLLMPP</sequence>
<organism evidence="7">
    <name type="scientific">Mus musculus</name>
    <name type="common">Mouse</name>
    <dbReference type="NCBI Taxonomy" id="10090"/>
    <lineage>
        <taxon>Eukaryota</taxon>
        <taxon>Metazoa</taxon>
        <taxon>Chordata</taxon>
        <taxon>Craniata</taxon>
        <taxon>Vertebrata</taxon>
        <taxon>Euteleostomi</taxon>
        <taxon>Mammalia</taxon>
        <taxon>Eutheria</taxon>
        <taxon>Euarchontoglires</taxon>
        <taxon>Glires</taxon>
        <taxon>Rodentia</taxon>
        <taxon>Myomorpha</taxon>
        <taxon>Muroidea</taxon>
        <taxon>Muridae</taxon>
        <taxon>Murinae</taxon>
        <taxon>Mus</taxon>
        <taxon>Mus</taxon>
    </lineage>
</organism>
<reference evidence="7" key="1">
    <citation type="journal article" date="2009" name="PLoS Biol.">
        <title>Lineage-specific biology revealed by a finished genome assembly of the mouse.</title>
        <authorList>
            <person name="Church D.M."/>
            <person name="Goodstadt L."/>
            <person name="Hillier L.W."/>
            <person name="Zody M.C."/>
            <person name="Goldstein S."/>
            <person name="She X."/>
            <person name="Bult C.J."/>
            <person name="Agarwala R."/>
            <person name="Cherry J.L."/>
            <person name="DiCuccio M."/>
            <person name="Hlavina W."/>
            <person name="Kapustin Y."/>
            <person name="Meric P."/>
            <person name="Maglott D."/>
            <person name="Birtle Z."/>
            <person name="Marques A.C."/>
            <person name="Graves T."/>
            <person name="Zhou S."/>
            <person name="Teague B."/>
            <person name="Potamousis K."/>
            <person name="Churas C."/>
            <person name="Place M."/>
            <person name="Herschleb J."/>
            <person name="Runnheim R."/>
            <person name="Forrest D."/>
            <person name="Amos-Landgraf J."/>
            <person name="Schwartz D.C."/>
            <person name="Cheng Z."/>
            <person name="Lindblad-Toh K."/>
            <person name="Eichler E.E."/>
            <person name="Ponting C.P."/>
        </authorList>
    </citation>
    <scope>NUCLEOTIDE SEQUENCE [LARGE SCALE GENOMIC DNA]</scope>
    <source>
        <strain evidence="7">C57BL/6J</strain>
    </source>
</reference>
<reference key="2">
    <citation type="journal article" date="2020" name="Genome Biol.">
        <title>The Tug1 lncRNA locus is essential for male fertility.</title>
        <authorList>
            <person name="Lewandowski J.P."/>
            <person name="Dumbovic G."/>
            <person name="Watson A.R."/>
            <person name="Hwang T."/>
            <person name="Jacobs-Palmer E."/>
            <person name="Chang N."/>
            <person name="Much C."/>
            <person name="Turner K.M."/>
            <person name="Kirby C."/>
            <person name="Rubinstein N.D."/>
            <person name="Groff A.F."/>
            <person name="Liapis S.C."/>
            <person name="Gerhardinger C."/>
            <person name="Bester A."/>
            <person name="Pandolfi P.P."/>
            <person name="Clohessy J.G."/>
            <person name="Hoekstra H.E."/>
            <person name="Sauvageau M."/>
            <person name="Rinn J.L."/>
        </authorList>
    </citation>
    <scope>SUBCELLULAR LOCATION</scope>
    <scope>TISSUE SPECIFICITY</scope>
</reference>
<evidence type="ECO:0000250" key="1">
    <source>
        <dbReference type="UniProtKB" id="A0A6I8PU40"/>
    </source>
</evidence>
<evidence type="ECO:0000255" key="2"/>
<evidence type="ECO:0000269" key="3">
    <source>
    </source>
</evidence>
<evidence type="ECO:0000305" key="4"/>
<evidence type="ECO:0000305" key="5">
    <source>
    </source>
</evidence>
<evidence type="ECO:0000312" key="6">
    <source>
        <dbReference type="MGI" id="MGI:2144114"/>
    </source>
</evidence>
<evidence type="ECO:0000312" key="7">
    <source>
        <dbReference type="Proteomes" id="UP000000589"/>
    </source>
</evidence>
<gene>
    <name evidence="6" type="primary">Tug1</name>
</gene>
<protein>
    <recommendedName>
        <fullName evidence="4">Taurine up-regulated 1 protein</fullName>
    </recommendedName>
</protein>
<accession>A0A6I8MX38</accession>
<comment type="subcellular location">
    <subcellularLocation>
        <location evidence="3">Nucleus membrane</location>
        <topology evidence="2">Single-pass type I membrane protein</topology>
    </subcellularLocation>
    <subcellularLocation>
        <location evidence="1">Mitochondrion membrane</location>
        <topology evidence="2">Single-pass type I membrane protein</topology>
    </subcellularLocation>
    <subcellularLocation>
        <location evidence="3">Cytoplasm</location>
    </subcellularLocation>
</comment>
<comment type="tissue specificity">
    <text evidence="3">Widely expressed in the adult with highest levels in placenta and testis (PubMed:32894169). Also expressed in a number of embryonic tissues at multiple embryonic stages (PubMed:32894169).</text>
</comment>
<comment type="caution">
    <text evidence="5">This sequence initiates at a non-canonical CTG leucine codon.</text>
</comment>
<name>TUG1_MOUSE</name>
<dbReference type="RefSeq" id="NP_001383450.1">
    <property type="nucleotide sequence ID" value="NM_001396521.1"/>
</dbReference>
<dbReference type="FunCoup" id="A0A6I8MX38">
    <property type="interactions" value="50"/>
</dbReference>
<dbReference type="GeneID" id="544752"/>
<dbReference type="MGI" id="MGI:2144114">
    <property type="gene designation" value="Tug1"/>
</dbReference>
<dbReference type="InParanoid" id="A0A6I8MX38"/>
<dbReference type="PRO" id="PR:A0A6I8MX38"/>
<dbReference type="Proteomes" id="UP000000589">
    <property type="component" value="Chromosome 11"/>
</dbReference>
<dbReference type="Bgee" id="ENSMUSG00000056579">
    <property type="expression patterns" value="Expressed in metanephric loop of Henle and 261 other cell types or tissues"/>
</dbReference>
<dbReference type="GO" id="GO:0031966">
    <property type="term" value="C:mitochondrial membrane"/>
    <property type="evidence" value="ECO:0007669"/>
    <property type="project" value="UniProtKB-SubCell"/>
</dbReference>
<dbReference type="GO" id="GO:0031965">
    <property type="term" value="C:nuclear membrane"/>
    <property type="evidence" value="ECO:0007669"/>
    <property type="project" value="UniProtKB-SubCell"/>
</dbReference>
<feature type="signal peptide" evidence="2">
    <location>
        <begin position="1"/>
        <end position="40"/>
    </location>
</feature>
<feature type="chain" id="PRO_5026021830" description="Taurine up-regulated 1 protein" evidence="2">
    <location>
        <begin position="41"/>
        <end position="142"/>
    </location>
</feature>
<feature type="topological domain" description="Extracellular" evidence="4">
    <location>
        <begin position="41"/>
        <end position="123"/>
    </location>
</feature>
<feature type="transmembrane region" description="Helical" evidence="2">
    <location>
        <begin position="124"/>
        <end position="140"/>
    </location>
</feature>
<feature type="topological domain" description="Cytoplasmic" evidence="4">
    <location>
        <begin position="141"/>
        <end position="142"/>
    </location>
</feature>
<proteinExistence type="evidence at transcript level"/>
<keyword id="KW-0963">Cytoplasm</keyword>
<keyword id="KW-0472">Membrane</keyword>
<keyword id="KW-0496">Mitochondrion</keyword>
<keyword id="KW-0539">Nucleus</keyword>
<keyword id="KW-1185">Reference proteome</keyword>
<keyword id="KW-0732">Signal</keyword>
<keyword id="KW-0812">Transmembrane</keyword>
<keyword id="KW-1133">Transmembrane helix</keyword>